<proteinExistence type="inferred from homology"/>
<reference key="1">
    <citation type="journal article" date="2007" name="Photosyn. Res.">
        <title>Complete nucleotide sequence of the freshwater unicellular cyanobacterium Synechococcus elongatus PCC 6301 chromosome: gene content and organization.</title>
        <authorList>
            <person name="Sugita C."/>
            <person name="Ogata K."/>
            <person name="Shikata M."/>
            <person name="Jikuya H."/>
            <person name="Takano J."/>
            <person name="Furumichi M."/>
            <person name="Kanehisa M."/>
            <person name="Omata T."/>
            <person name="Sugiura M."/>
            <person name="Sugita M."/>
        </authorList>
    </citation>
    <scope>NUCLEOTIDE SEQUENCE [LARGE SCALE GENOMIC DNA]</scope>
    <source>
        <strain>ATCC 27144 / PCC 6301 / SAUG 1402/1</strain>
    </source>
</reference>
<accession>Q5N092</accession>
<keyword id="KW-0067">ATP-binding</keyword>
<keyword id="KW-0173">Coenzyme A biosynthesis</keyword>
<keyword id="KW-0963">Cytoplasm</keyword>
<keyword id="KW-0460">Magnesium</keyword>
<keyword id="KW-0547">Nucleotide-binding</keyword>
<keyword id="KW-0548">Nucleotidyltransferase</keyword>
<keyword id="KW-0808">Transferase</keyword>
<evidence type="ECO:0000255" key="1">
    <source>
        <dbReference type="HAMAP-Rule" id="MF_00151"/>
    </source>
</evidence>
<name>COAD_SYNP6</name>
<gene>
    <name evidence="1" type="primary">coaD</name>
    <name type="ordered locus">syc2088_d</name>
</gene>
<dbReference type="EC" id="2.7.7.3" evidence="1"/>
<dbReference type="EMBL" id="AP008231">
    <property type="protein sequence ID" value="BAD80278.1"/>
    <property type="molecule type" value="Genomic_DNA"/>
</dbReference>
<dbReference type="RefSeq" id="WP_011244398.1">
    <property type="nucleotide sequence ID" value="NZ_CP085785.1"/>
</dbReference>
<dbReference type="SMR" id="Q5N092"/>
<dbReference type="GeneID" id="72430881"/>
<dbReference type="KEGG" id="syc:syc2088_d"/>
<dbReference type="eggNOG" id="COG0669">
    <property type="taxonomic scope" value="Bacteria"/>
</dbReference>
<dbReference type="UniPathway" id="UPA00241">
    <property type="reaction ID" value="UER00355"/>
</dbReference>
<dbReference type="Proteomes" id="UP000001175">
    <property type="component" value="Chromosome"/>
</dbReference>
<dbReference type="GO" id="GO:0005737">
    <property type="term" value="C:cytoplasm"/>
    <property type="evidence" value="ECO:0007669"/>
    <property type="project" value="UniProtKB-SubCell"/>
</dbReference>
<dbReference type="GO" id="GO:0005524">
    <property type="term" value="F:ATP binding"/>
    <property type="evidence" value="ECO:0007669"/>
    <property type="project" value="UniProtKB-KW"/>
</dbReference>
<dbReference type="GO" id="GO:0004595">
    <property type="term" value="F:pantetheine-phosphate adenylyltransferase activity"/>
    <property type="evidence" value="ECO:0007669"/>
    <property type="project" value="UniProtKB-UniRule"/>
</dbReference>
<dbReference type="GO" id="GO:0015937">
    <property type="term" value="P:coenzyme A biosynthetic process"/>
    <property type="evidence" value="ECO:0007669"/>
    <property type="project" value="UniProtKB-UniRule"/>
</dbReference>
<dbReference type="CDD" id="cd02163">
    <property type="entry name" value="PPAT"/>
    <property type="match status" value="1"/>
</dbReference>
<dbReference type="Gene3D" id="3.40.50.620">
    <property type="entry name" value="HUPs"/>
    <property type="match status" value="1"/>
</dbReference>
<dbReference type="HAMAP" id="MF_00151">
    <property type="entry name" value="PPAT_bact"/>
    <property type="match status" value="1"/>
</dbReference>
<dbReference type="InterPro" id="IPR004821">
    <property type="entry name" value="Cyt_trans-like"/>
</dbReference>
<dbReference type="InterPro" id="IPR001980">
    <property type="entry name" value="PPAT"/>
</dbReference>
<dbReference type="InterPro" id="IPR014729">
    <property type="entry name" value="Rossmann-like_a/b/a_fold"/>
</dbReference>
<dbReference type="NCBIfam" id="TIGR01510">
    <property type="entry name" value="coaD_prev_kdtB"/>
    <property type="match status" value="1"/>
</dbReference>
<dbReference type="NCBIfam" id="TIGR00125">
    <property type="entry name" value="cyt_tran_rel"/>
    <property type="match status" value="1"/>
</dbReference>
<dbReference type="PANTHER" id="PTHR21342">
    <property type="entry name" value="PHOSPHOPANTETHEINE ADENYLYLTRANSFERASE"/>
    <property type="match status" value="1"/>
</dbReference>
<dbReference type="PANTHER" id="PTHR21342:SF1">
    <property type="entry name" value="PHOSPHOPANTETHEINE ADENYLYLTRANSFERASE"/>
    <property type="match status" value="1"/>
</dbReference>
<dbReference type="Pfam" id="PF01467">
    <property type="entry name" value="CTP_transf_like"/>
    <property type="match status" value="1"/>
</dbReference>
<dbReference type="PRINTS" id="PR01020">
    <property type="entry name" value="LPSBIOSNTHSS"/>
</dbReference>
<dbReference type="SUPFAM" id="SSF52374">
    <property type="entry name" value="Nucleotidylyl transferase"/>
    <property type="match status" value="1"/>
</dbReference>
<protein>
    <recommendedName>
        <fullName evidence="1">Phosphopantetheine adenylyltransferase</fullName>
        <ecNumber evidence="1">2.7.7.3</ecNumber>
    </recommendedName>
    <alternativeName>
        <fullName evidence="1">Dephospho-CoA pyrophosphorylase</fullName>
    </alternativeName>
    <alternativeName>
        <fullName evidence="1">Pantetheine-phosphate adenylyltransferase</fullName>
        <shortName evidence="1">PPAT</shortName>
    </alternativeName>
</protein>
<sequence length="166" mass="18659">MNAIYPGSFDPITFGHLDIIERGCRLFDQVYVAVLRNPNKQPMFSVQERLEQIAKAIAHLPNAQVDSFEGLTVNYARQRQAGAILRGLRVLSDFELELQMANTNKTLASDLETVFLTTSTEYSFLSSSLVKEVARFGGNVEHFVPSHVAAALYDQFHPVVERDRLT</sequence>
<feature type="chain" id="PRO_0000156292" description="Phosphopantetheine adenylyltransferase">
    <location>
        <begin position="1"/>
        <end position="166"/>
    </location>
</feature>
<feature type="binding site" evidence="1">
    <location>
        <begin position="8"/>
        <end position="9"/>
    </location>
    <ligand>
        <name>ATP</name>
        <dbReference type="ChEBI" id="CHEBI:30616"/>
    </ligand>
</feature>
<feature type="binding site" evidence="1">
    <location>
        <position position="8"/>
    </location>
    <ligand>
        <name>substrate</name>
    </ligand>
</feature>
<feature type="binding site" evidence="1">
    <location>
        <position position="16"/>
    </location>
    <ligand>
        <name>ATP</name>
        <dbReference type="ChEBI" id="CHEBI:30616"/>
    </ligand>
</feature>
<feature type="binding site" evidence="1">
    <location>
        <position position="40"/>
    </location>
    <ligand>
        <name>substrate</name>
    </ligand>
</feature>
<feature type="binding site" evidence="1">
    <location>
        <position position="72"/>
    </location>
    <ligand>
        <name>substrate</name>
    </ligand>
</feature>
<feature type="binding site" evidence="1">
    <location>
        <position position="86"/>
    </location>
    <ligand>
        <name>substrate</name>
    </ligand>
</feature>
<feature type="binding site" evidence="1">
    <location>
        <begin position="87"/>
        <end position="89"/>
    </location>
    <ligand>
        <name>ATP</name>
        <dbReference type="ChEBI" id="CHEBI:30616"/>
    </ligand>
</feature>
<feature type="binding site" evidence="1">
    <location>
        <position position="97"/>
    </location>
    <ligand>
        <name>ATP</name>
        <dbReference type="ChEBI" id="CHEBI:30616"/>
    </ligand>
</feature>
<feature type="binding site" evidence="1">
    <location>
        <begin position="122"/>
        <end position="128"/>
    </location>
    <ligand>
        <name>ATP</name>
        <dbReference type="ChEBI" id="CHEBI:30616"/>
    </ligand>
</feature>
<feature type="site" description="Transition state stabilizer" evidence="1">
    <location>
        <position position="16"/>
    </location>
</feature>
<organism>
    <name type="scientific">Synechococcus sp. (strain ATCC 27144 / PCC 6301 / SAUG 1402/1)</name>
    <name type="common">Anacystis nidulans</name>
    <dbReference type="NCBI Taxonomy" id="269084"/>
    <lineage>
        <taxon>Bacteria</taxon>
        <taxon>Bacillati</taxon>
        <taxon>Cyanobacteriota</taxon>
        <taxon>Cyanophyceae</taxon>
        <taxon>Synechococcales</taxon>
        <taxon>Synechococcaceae</taxon>
        <taxon>Synechococcus</taxon>
    </lineage>
</organism>
<comment type="function">
    <text evidence="1">Reversibly transfers an adenylyl group from ATP to 4'-phosphopantetheine, yielding dephospho-CoA (dPCoA) and pyrophosphate.</text>
</comment>
<comment type="catalytic activity">
    <reaction evidence="1">
        <text>(R)-4'-phosphopantetheine + ATP + H(+) = 3'-dephospho-CoA + diphosphate</text>
        <dbReference type="Rhea" id="RHEA:19801"/>
        <dbReference type="ChEBI" id="CHEBI:15378"/>
        <dbReference type="ChEBI" id="CHEBI:30616"/>
        <dbReference type="ChEBI" id="CHEBI:33019"/>
        <dbReference type="ChEBI" id="CHEBI:57328"/>
        <dbReference type="ChEBI" id="CHEBI:61723"/>
        <dbReference type="EC" id="2.7.7.3"/>
    </reaction>
</comment>
<comment type="cofactor">
    <cofactor evidence="1">
        <name>Mg(2+)</name>
        <dbReference type="ChEBI" id="CHEBI:18420"/>
    </cofactor>
</comment>
<comment type="pathway">
    <text evidence="1">Cofactor biosynthesis; coenzyme A biosynthesis; CoA from (R)-pantothenate: step 4/5.</text>
</comment>
<comment type="subunit">
    <text evidence="1">Homohexamer.</text>
</comment>
<comment type="subcellular location">
    <subcellularLocation>
        <location evidence="1">Cytoplasm</location>
    </subcellularLocation>
</comment>
<comment type="similarity">
    <text evidence="1">Belongs to the bacterial CoaD family.</text>
</comment>